<name>CYSZ_SALTY</name>
<reference key="1">
    <citation type="journal article" date="1988" name="J. Bacteriol.">
        <title>DNA sequences of the cysK regions of Salmonella typhimurium and Escherichia coli and linkage of the cysK regions to ptsH.</title>
        <authorList>
            <person name="Byrne C.R."/>
            <person name="Monroe R.S."/>
            <person name="Ward K.A."/>
            <person name="Kredich N.M."/>
        </authorList>
    </citation>
    <scope>NUCLEOTIDE SEQUENCE [GENOMIC DNA]</scope>
    <source>
        <strain>LT2</strain>
    </source>
</reference>
<reference key="2">
    <citation type="journal article" date="2001" name="Nature">
        <title>Complete genome sequence of Salmonella enterica serovar Typhimurium LT2.</title>
        <authorList>
            <person name="McClelland M."/>
            <person name="Sanderson K.E."/>
            <person name="Spieth J."/>
            <person name="Clifton S.W."/>
            <person name="Latreille P."/>
            <person name="Courtney L."/>
            <person name="Porwollik S."/>
            <person name="Ali J."/>
            <person name="Dante M."/>
            <person name="Du F."/>
            <person name="Hou S."/>
            <person name="Layman D."/>
            <person name="Leonard S."/>
            <person name="Nguyen C."/>
            <person name="Scott K."/>
            <person name="Holmes A."/>
            <person name="Grewal N."/>
            <person name="Mulvaney E."/>
            <person name="Ryan E."/>
            <person name="Sun H."/>
            <person name="Florea L."/>
            <person name="Miller W."/>
            <person name="Stoneking T."/>
            <person name="Nhan M."/>
            <person name="Waterston R."/>
            <person name="Wilson R.K."/>
        </authorList>
    </citation>
    <scope>NUCLEOTIDE SEQUENCE [LARGE SCALE GENOMIC DNA]</scope>
    <source>
        <strain>LT2 / SGSC1412 / ATCC 700720</strain>
    </source>
</reference>
<proteinExistence type="inferred from homology"/>
<gene>
    <name evidence="1" type="primary">cysZ</name>
    <name type="ordered locus">STM2429</name>
</gene>
<sequence>MVSSSTTVPRSGVYYFSQGWKLVTLPGIRRFVILPLLVNIVLMGGAFWWLFTQLDAWIPSLMSHVPDWLQWLSYLLWPIAVISVLLVFGYFFSTLANWIAAPFNGLLAEQLEARLTGATPPDTGILGIMKDVPRIMKREWQKLAWYLPRAIVLLILYFIPGIGQTIAPVLWFLFSAWMLAIQYCDYPFDNHKVPFKTMRAALRTQKVANMQFGALTSLFTMIPVLNLFIMPVAVCGATAMWVDCWRAKHALWK</sequence>
<keyword id="KW-0028">Amino-acid biosynthesis</keyword>
<keyword id="KW-0997">Cell inner membrane</keyword>
<keyword id="KW-1003">Cell membrane</keyword>
<keyword id="KW-0198">Cysteine biosynthesis</keyword>
<keyword id="KW-0472">Membrane</keyword>
<keyword id="KW-1185">Reference proteome</keyword>
<keyword id="KW-0764">Sulfate transport</keyword>
<keyword id="KW-0812">Transmembrane</keyword>
<keyword id="KW-1133">Transmembrane helix</keyword>
<keyword id="KW-0813">Transport</keyword>
<dbReference type="EMBL" id="M21450">
    <property type="protein sequence ID" value="AAA27050.1"/>
    <property type="status" value="ALT_INIT"/>
    <property type="molecule type" value="Genomic_DNA"/>
</dbReference>
<dbReference type="EMBL" id="AE006468">
    <property type="protein sequence ID" value="AAL21323.1"/>
    <property type="molecule type" value="Genomic_DNA"/>
</dbReference>
<dbReference type="PIR" id="A28181">
    <property type="entry name" value="BVEBCZ"/>
</dbReference>
<dbReference type="RefSeq" id="NP_461364.1">
    <property type="nucleotide sequence ID" value="NC_003197.2"/>
</dbReference>
<dbReference type="RefSeq" id="WP_000255006.1">
    <property type="nucleotide sequence ID" value="NC_003197.2"/>
</dbReference>
<dbReference type="SMR" id="P12673"/>
<dbReference type="STRING" id="99287.STM2429"/>
<dbReference type="PaxDb" id="99287-STM2429"/>
<dbReference type="GeneID" id="1253951"/>
<dbReference type="KEGG" id="stm:STM2429"/>
<dbReference type="PATRIC" id="fig|99287.12.peg.2566"/>
<dbReference type="HOGENOM" id="CLU_070331_1_0_6"/>
<dbReference type="PhylomeDB" id="P12673"/>
<dbReference type="BioCyc" id="SENT99287:STM2429-MONOMER"/>
<dbReference type="Proteomes" id="UP000001014">
    <property type="component" value="Chromosome"/>
</dbReference>
<dbReference type="GO" id="GO:0005886">
    <property type="term" value="C:plasma membrane"/>
    <property type="evidence" value="ECO:0000318"/>
    <property type="project" value="GO_Central"/>
</dbReference>
<dbReference type="GO" id="GO:0009675">
    <property type="term" value="F:high-affinity sulfate:proton symporter activity"/>
    <property type="evidence" value="ECO:0000318"/>
    <property type="project" value="GO_Central"/>
</dbReference>
<dbReference type="GO" id="GO:0019344">
    <property type="term" value="P:cysteine biosynthetic process"/>
    <property type="evidence" value="ECO:0000318"/>
    <property type="project" value="GO_Central"/>
</dbReference>
<dbReference type="GO" id="GO:0000103">
    <property type="term" value="P:sulfate assimilation"/>
    <property type="evidence" value="ECO:0000318"/>
    <property type="project" value="GO_Central"/>
</dbReference>
<dbReference type="HAMAP" id="MF_00468">
    <property type="entry name" value="CysZ"/>
    <property type="match status" value="1"/>
</dbReference>
<dbReference type="InterPro" id="IPR050480">
    <property type="entry name" value="CysZ_sulfate_transptr"/>
</dbReference>
<dbReference type="InterPro" id="IPR022985">
    <property type="entry name" value="Sulfate_CysZ"/>
</dbReference>
<dbReference type="NCBIfam" id="NF003433">
    <property type="entry name" value="PRK04949.1"/>
    <property type="match status" value="1"/>
</dbReference>
<dbReference type="PANTHER" id="PTHR37468">
    <property type="entry name" value="SULFATE TRANSPORTER CYSZ"/>
    <property type="match status" value="1"/>
</dbReference>
<dbReference type="PANTHER" id="PTHR37468:SF1">
    <property type="entry name" value="SULFATE TRANSPORTER CYSZ"/>
    <property type="match status" value="1"/>
</dbReference>
<dbReference type="Pfam" id="PF07264">
    <property type="entry name" value="EI24"/>
    <property type="match status" value="1"/>
</dbReference>
<accession>P12673</accession>
<feature type="chain" id="PRO_0000204349" description="Sulfate transporter CysZ">
    <location>
        <begin position="1"/>
        <end position="253"/>
    </location>
</feature>
<feature type="transmembrane region" description="Helical" evidence="1">
    <location>
        <begin position="31"/>
        <end position="51"/>
    </location>
</feature>
<feature type="transmembrane region" description="Helical" evidence="1">
    <location>
        <begin position="72"/>
        <end position="92"/>
    </location>
</feature>
<feature type="transmembrane region" description="Helical" evidence="1">
    <location>
        <begin position="151"/>
        <end position="171"/>
    </location>
</feature>
<feature type="transmembrane region" description="Helical" evidence="1">
    <location>
        <begin position="222"/>
        <end position="242"/>
    </location>
</feature>
<evidence type="ECO:0000255" key="1">
    <source>
        <dbReference type="HAMAP-Rule" id="MF_00468"/>
    </source>
</evidence>
<evidence type="ECO:0000305" key="2"/>
<comment type="function">
    <text>Possibly involved in sulfate transport.</text>
</comment>
<comment type="function">
    <text evidence="1">High affinity, high specificity proton-dependent sulfate transporter, which mediates sulfate uptake. Provides the sulfur source for the cysteine synthesis pathway.</text>
</comment>
<comment type="subcellular location">
    <subcellularLocation>
        <location evidence="1">Cell inner membrane</location>
        <topology evidence="1">Multi-pass membrane protein</topology>
    </subcellularLocation>
</comment>
<comment type="similarity">
    <text evidence="1">Belongs to the CysZ family.</text>
</comment>
<comment type="sequence caution" evidence="2">
    <conflict type="erroneous initiation">
        <sequence resource="EMBL-CDS" id="AAA27050"/>
    </conflict>
</comment>
<protein>
    <recommendedName>
        <fullName evidence="1">Sulfate transporter CysZ</fullName>
    </recommendedName>
</protein>
<organism>
    <name type="scientific">Salmonella typhimurium (strain LT2 / SGSC1412 / ATCC 700720)</name>
    <dbReference type="NCBI Taxonomy" id="99287"/>
    <lineage>
        <taxon>Bacteria</taxon>
        <taxon>Pseudomonadati</taxon>
        <taxon>Pseudomonadota</taxon>
        <taxon>Gammaproteobacteria</taxon>
        <taxon>Enterobacterales</taxon>
        <taxon>Enterobacteriaceae</taxon>
        <taxon>Salmonella</taxon>
    </lineage>
</organism>